<sequence length="759" mass="85808">MVHFLHPGHTPRNIVPPDAQKDALGCCVVQEEASPYTLVNICLNVLIANLEKLCSERPDGTLCLPEHWSFPQEVAERFLRVMTWQGKLTDRTASIFRGNQMKLKLVNIQKAKISTAAFIKAFCRHKLIELNATAVHADLPVPDIISGLCSNRWIQQNLQCLLLDSTSIPQNSRLLFFSQLTGLRILSVFNVCFHTEDLANVSQLPRLESLDISNTLVTDISALLTCKDRLKSLTMHYLKCLAMTKSQILAVIRELKCLLHLDISDHRQLKSDLAFHLLQQKDILPNVVSLDISGGNCITDEAVELFIRLRPAMQFVGLLATDAGSSDFFTTKQGLRVAGGASMSQISEALSRYRNRSCFVKEALHRLFTETFSMEVTMPAILKLVAIGMRNHPLDLRVQFTASACALNLTRQGLAKGMPVRLLSEVTCLLFKALKNFPHYQQLQKNCLLSLTNSRILVDVPFDRFDAAKFVMRWLCKHENPKMQTMAVSVTSILALQLSPEQTAQLEELFMAVKELLAIVKQKTTENLDDVTFLFTLKALWNLTDGSPAACKHFIENQGLQIFIQVLETFSESAIQSKVLGLLNNIAEVRELSSKLVTEDVLKHINSLLCSREMEVSYFAAGIIAHLTSDRQLWISRDFQRRTLLQDLHATIQNWPSSSCKMTALVTYRSFKTFFPLLGNFSQPEVQLWALWAMYHVCSKNPSKYCKMLVEEEGLQLLCDIQEHSEATPKAQQIAASILDDFRMHFMNYQRPTLCQMPF</sequence>
<evidence type="ECO:0000250" key="1"/>
<evidence type="ECO:0000303" key="2">
    <source ref="1"/>
</evidence>
<evidence type="ECO:0000305" key="3"/>
<feature type="chain" id="PRO_0000305085" description="Protein zyg-11 homolog A">
    <location>
        <begin position="1"/>
        <end position="759"/>
    </location>
</feature>
<feature type="repeat" description="LRR 1">
    <location>
        <begin position="204"/>
        <end position="227"/>
    </location>
</feature>
<feature type="repeat" description="LRR 2">
    <location>
        <begin position="235"/>
        <end position="260"/>
    </location>
</feature>
<feature type="repeat" description="LRR 3">
    <location>
        <begin position="490"/>
        <end position="513"/>
    </location>
</feature>
<feature type="splice variant" id="VSP_028223" description="In isoform 2." evidence="2">
    <location>
        <begin position="1"/>
        <end position="342"/>
    </location>
</feature>
<proteinExistence type="evidence at protein level"/>
<organism>
    <name type="scientific">Homo sapiens</name>
    <name type="common">Human</name>
    <dbReference type="NCBI Taxonomy" id="9606"/>
    <lineage>
        <taxon>Eukaryota</taxon>
        <taxon>Metazoa</taxon>
        <taxon>Chordata</taxon>
        <taxon>Craniata</taxon>
        <taxon>Vertebrata</taxon>
        <taxon>Euteleostomi</taxon>
        <taxon>Mammalia</taxon>
        <taxon>Eutheria</taxon>
        <taxon>Euarchontoglires</taxon>
        <taxon>Primates</taxon>
        <taxon>Haplorrhini</taxon>
        <taxon>Catarrhini</taxon>
        <taxon>Hominidae</taxon>
        <taxon>Homo</taxon>
    </lineage>
</organism>
<keyword id="KW-0025">Alternative splicing</keyword>
<keyword id="KW-0433">Leucine-rich repeat</keyword>
<keyword id="KW-1267">Proteomics identification</keyword>
<keyword id="KW-1185">Reference proteome</keyword>
<keyword id="KW-0677">Repeat</keyword>
<keyword id="KW-0833">Ubl conjugation pathway</keyword>
<reference key="1">
    <citation type="submission" date="2003-04" db="EMBL/GenBank/DDBJ databases">
        <title>The human homolog of the Caenorhabditis elegans ZYG-11 gene is frequently hypermethylated and suppressed in human tumor cells.</title>
        <authorList>
            <person name="Uzvolgyi E."/>
            <person name="Liang G."/>
            <person name="Sumegi J."/>
            <person name="Tang L."/>
            <person name="Ryder P.C."/>
            <person name="Talmadge C.B."/>
            <person name="Cohen S.M."/>
            <person name="Christman J.K."/>
            <person name="Jones P.A."/>
        </authorList>
    </citation>
    <scope>NUCLEOTIDE SEQUENCE [MRNA] (ISOFORM 2)</scope>
</reference>
<reference key="2">
    <citation type="journal article" date="2006" name="Nature">
        <title>The DNA sequence and biological annotation of human chromosome 1.</title>
        <authorList>
            <person name="Gregory S.G."/>
            <person name="Barlow K.F."/>
            <person name="McLay K.E."/>
            <person name="Kaul R."/>
            <person name="Swarbreck D."/>
            <person name="Dunham A."/>
            <person name="Scott C.E."/>
            <person name="Howe K.L."/>
            <person name="Woodfine K."/>
            <person name="Spencer C.C.A."/>
            <person name="Jones M.C."/>
            <person name="Gillson C."/>
            <person name="Searle S."/>
            <person name="Zhou Y."/>
            <person name="Kokocinski F."/>
            <person name="McDonald L."/>
            <person name="Evans R."/>
            <person name="Phillips K."/>
            <person name="Atkinson A."/>
            <person name="Cooper R."/>
            <person name="Jones C."/>
            <person name="Hall R.E."/>
            <person name="Andrews T.D."/>
            <person name="Lloyd C."/>
            <person name="Ainscough R."/>
            <person name="Almeida J.P."/>
            <person name="Ambrose K.D."/>
            <person name="Anderson F."/>
            <person name="Andrew R.W."/>
            <person name="Ashwell R.I.S."/>
            <person name="Aubin K."/>
            <person name="Babbage A.K."/>
            <person name="Bagguley C.L."/>
            <person name="Bailey J."/>
            <person name="Beasley H."/>
            <person name="Bethel G."/>
            <person name="Bird C.P."/>
            <person name="Bray-Allen S."/>
            <person name="Brown J.Y."/>
            <person name="Brown A.J."/>
            <person name="Buckley D."/>
            <person name="Burton J."/>
            <person name="Bye J."/>
            <person name="Carder C."/>
            <person name="Chapman J.C."/>
            <person name="Clark S.Y."/>
            <person name="Clarke G."/>
            <person name="Clee C."/>
            <person name="Cobley V."/>
            <person name="Collier R.E."/>
            <person name="Corby N."/>
            <person name="Coville G.J."/>
            <person name="Davies J."/>
            <person name="Deadman R."/>
            <person name="Dunn M."/>
            <person name="Earthrowl M."/>
            <person name="Ellington A.G."/>
            <person name="Errington H."/>
            <person name="Frankish A."/>
            <person name="Frankland J."/>
            <person name="French L."/>
            <person name="Garner P."/>
            <person name="Garnett J."/>
            <person name="Gay L."/>
            <person name="Ghori M.R.J."/>
            <person name="Gibson R."/>
            <person name="Gilby L.M."/>
            <person name="Gillett W."/>
            <person name="Glithero R.J."/>
            <person name="Grafham D.V."/>
            <person name="Griffiths C."/>
            <person name="Griffiths-Jones S."/>
            <person name="Grocock R."/>
            <person name="Hammond S."/>
            <person name="Harrison E.S.I."/>
            <person name="Hart E."/>
            <person name="Haugen E."/>
            <person name="Heath P.D."/>
            <person name="Holmes S."/>
            <person name="Holt K."/>
            <person name="Howden P.J."/>
            <person name="Hunt A.R."/>
            <person name="Hunt S.E."/>
            <person name="Hunter G."/>
            <person name="Isherwood J."/>
            <person name="James R."/>
            <person name="Johnson C."/>
            <person name="Johnson D."/>
            <person name="Joy A."/>
            <person name="Kay M."/>
            <person name="Kershaw J.K."/>
            <person name="Kibukawa M."/>
            <person name="Kimberley A.M."/>
            <person name="King A."/>
            <person name="Knights A.J."/>
            <person name="Lad H."/>
            <person name="Laird G."/>
            <person name="Lawlor S."/>
            <person name="Leongamornlert D.A."/>
            <person name="Lloyd D.M."/>
            <person name="Loveland J."/>
            <person name="Lovell J."/>
            <person name="Lush M.J."/>
            <person name="Lyne R."/>
            <person name="Martin S."/>
            <person name="Mashreghi-Mohammadi M."/>
            <person name="Matthews L."/>
            <person name="Matthews N.S.W."/>
            <person name="McLaren S."/>
            <person name="Milne S."/>
            <person name="Mistry S."/>
            <person name="Moore M.J.F."/>
            <person name="Nickerson T."/>
            <person name="O'Dell C.N."/>
            <person name="Oliver K."/>
            <person name="Palmeiri A."/>
            <person name="Palmer S.A."/>
            <person name="Parker A."/>
            <person name="Patel D."/>
            <person name="Pearce A.V."/>
            <person name="Peck A.I."/>
            <person name="Pelan S."/>
            <person name="Phelps K."/>
            <person name="Phillimore B.J."/>
            <person name="Plumb R."/>
            <person name="Rajan J."/>
            <person name="Raymond C."/>
            <person name="Rouse G."/>
            <person name="Saenphimmachak C."/>
            <person name="Sehra H.K."/>
            <person name="Sheridan E."/>
            <person name="Shownkeen R."/>
            <person name="Sims S."/>
            <person name="Skuce C.D."/>
            <person name="Smith M."/>
            <person name="Steward C."/>
            <person name="Subramanian S."/>
            <person name="Sycamore N."/>
            <person name="Tracey A."/>
            <person name="Tromans A."/>
            <person name="Van Helmond Z."/>
            <person name="Wall M."/>
            <person name="Wallis J.M."/>
            <person name="White S."/>
            <person name="Whitehead S.L."/>
            <person name="Wilkinson J.E."/>
            <person name="Willey D.L."/>
            <person name="Williams H."/>
            <person name="Wilming L."/>
            <person name="Wray P.W."/>
            <person name="Wu Z."/>
            <person name="Coulson A."/>
            <person name="Vaudin M."/>
            <person name="Sulston J.E."/>
            <person name="Durbin R.M."/>
            <person name="Hubbard T."/>
            <person name="Wooster R."/>
            <person name="Dunham I."/>
            <person name="Carter N.P."/>
            <person name="McVean G."/>
            <person name="Ross M.T."/>
            <person name="Harrow J."/>
            <person name="Olson M.V."/>
            <person name="Beck S."/>
            <person name="Rogers J."/>
            <person name="Bentley D.R."/>
        </authorList>
    </citation>
    <scope>NUCLEOTIDE SEQUENCE [LARGE SCALE GENOMIC DNA]</scope>
</reference>
<name>ZY11A_HUMAN</name>
<gene>
    <name type="primary">ZYG11A</name>
    <name type="synonym">ZYG11</name>
</gene>
<dbReference type="EMBL" id="AY271826">
    <property type="protein sequence ID" value="AAQ01753.1"/>
    <property type="molecule type" value="mRNA"/>
</dbReference>
<dbReference type="EMBL" id="AC099677">
    <property type="status" value="NOT_ANNOTATED_CDS"/>
    <property type="molecule type" value="Genomic_DNA"/>
</dbReference>
<dbReference type="CCDS" id="CCDS44148.1">
    <molecule id="Q6WRX3-1"/>
</dbReference>
<dbReference type="CCDS" id="CCDS76166.1">
    <molecule id="Q6WRX3-2"/>
</dbReference>
<dbReference type="RefSeq" id="NP_001004339.2">
    <molecule id="Q6WRX3-1"/>
    <property type="nucleotide sequence ID" value="NM_001004339.3"/>
</dbReference>
<dbReference type="RefSeq" id="NP_001294860.1">
    <molecule id="Q6WRX3-2"/>
    <property type="nucleotide sequence ID" value="NM_001307931.2"/>
</dbReference>
<dbReference type="SMR" id="Q6WRX3"/>
<dbReference type="BioGRID" id="136714">
    <property type="interactions" value="21"/>
</dbReference>
<dbReference type="FunCoup" id="Q6WRX3">
    <property type="interactions" value="91"/>
</dbReference>
<dbReference type="IntAct" id="Q6WRX3">
    <property type="interactions" value="17"/>
</dbReference>
<dbReference type="STRING" id="9606.ENSP00000360583"/>
<dbReference type="GlyGen" id="Q6WRX3">
    <property type="glycosylation" value="1 site, 1 O-linked glycan (1 site)"/>
</dbReference>
<dbReference type="iPTMnet" id="Q6WRX3"/>
<dbReference type="PhosphoSitePlus" id="Q6WRX3"/>
<dbReference type="BioMuta" id="ZYG11A"/>
<dbReference type="DMDM" id="317373488"/>
<dbReference type="jPOST" id="Q6WRX3"/>
<dbReference type="MassIVE" id="Q6WRX3"/>
<dbReference type="PaxDb" id="9606-ENSP00000360583"/>
<dbReference type="PeptideAtlas" id="Q6WRX3"/>
<dbReference type="ProteomicsDB" id="67777">
    <molecule id="Q6WRX3-1"/>
</dbReference>
<dbReference type="ProteomicsDB" id="67778">
    <molecule id="Q6WRX3-2"/>
</dbReference>
<dbReference type="Antibodypedia" id="33035">
    <property type="antibodies" value="76 antibodies from 17 providers"/>
</dbReference>
<dbReference type="DNASU" id="440590"/>
<dbReference type="Ensembl" id="ENST00000371528.2">
    <molecule id="Q6WRX3-1"/>
    <property type="protein sequence ID" value="ENSP00000360583.1"/>
    <property type="gene ID" value="ENSG00000203995.11"/>
</dbReference>
<dbReference type="Ensembl" id="ENST00000371532.5">
    <molecule id="Q6WRX3-2"/>
    <property type="protein sequence ID" value="ENSP00000360587.1"/>
    <property type="gene ID" value="ENSG00000203995.11"/>
</dbReference>
<dbReference type="GeneID" id="440590"/>
<dbReference type="KEGG" id="hsa:440590"/>
<dbReference type="MANE-Select" id="ENST00000371528.2">
    <property type="protein sequence ID" value="ENSP00000360583.1"/>
    <property type="RefSeq nucleotide sequence ID" value="NM_001004339.3"/>
    <property type="RefSeq protein sequence ID" value="NP_001004339.2"/>
</dbReference>
<dbReference type="UCSC" id="uc001cuk.3">
    <molecule id="Q6WRX3-1"/>
    <property type="organism name" value="human"/>
</dbReference>
<dbReference type="AGR" id="HGNC:32058"/>
<dbReference type="CTD" id="440590"/>
<dbReference type="DisGeNET" id="440590"/>
<dbReference type="GeneCards" id="ZYG11A"/>
<dbReference type="HGNC" id="HGNC:32058">
    <property type="gene designation" value="ZYG11A"/>
</dbReference>
<dbReference type="HPA" id="ENSG00000203995">
    <property type="expression patterns" value="Tissue enhanced (kidney, testis, thyroid gland)"/>
</dbReference>
<dbReference type="MIM" id="618675">
    <property type="type" value="gene"/>
</dbReference>
<dbReference type="neXtProt" id="NX_Q6WRX3"/>
<dbReference type="OpenTargets" id="ENSG00000203995"/>
<dbReference type="PharmGKB" id="PA142670467"/>
<dbReference type="VEuPathDB" id="HostDB:ENSG00000203995"/>
<dbReference type="eggNOG" id="KOG3665">
    <property type="taxonomic scope" value="Eukaryota"/>
</dbReference>
<dbReference type="GeneTree" id="ENSGT00530000063187"/>
<dbReference type="HOGENOM" id="CLU_011533_0_1_1"/>
<dbReference type="InParanoid" id="Q6WRX3"/>
<dbReference type="OMA" id="LTICNDY"/>
<dbReference type="OrthoDB" id="120976at2759"/>
<dbReference type="PAN-GO" id="Q6WRX3">
    <property type="GO annotations" value="1 GO annotation based on evolutionary models"/>
</dbReference>
<dbReference type="PhylomeDB" id="Q6WRX3"/>
<dbReference type="TreeFam" id="TF313007"/>
<dbReference type="PathwayCommons" id="Q6WRX3"/>
<dbReference type="SignaLink" id="Q6WRX3"/>
<dbReference type="BioGRID-ORCS" id="440590">
    <property type="hits" value="12 hits in 1153 CRISPR screens"/>
</dbReference>
<dbReference type="GenomeRNAi" id="440590"/>
<dbReference type="Pharos" id="Q6WRX3">
    <property type="development level" value="Tbio"/>
</dbReference>
<dbReference type="PRO" id="PR:Q6WRX3"/>
<dbReference type="Proteomes" id="UP000005640">
    <property type="component" value="Chromosome 1"/>
</dbReference>
<dbReference type="RNAct" id="Q6WRX3">
    <property type="molecule type" value="protein"/>
</dbReference>
<dbReference type="Bgee" id="ENSG00000203995">
    <property type="expression patterns" value="Expressed in oocyte and 45 other cell types or tissues"/>
</dbReference>
<dbReference type="GO" id="GO:0031462">
    <property type="term" value="C:Cul2-RING ubiquitin ligase complex"/>
    <property type="evidence" value="ECO:0000318"/>
    <property type="project" value="GO_Central"/>
</dbReference>
<dbReference type="FunFam" id="3.80.10.10:FF:001025">
    <property type="entry name" value="Protein zyg-11 homolog A"/>
    <property type="match status" value="1"/>
</dbReference>
<dbReference type="FunFam" id="1.25.10.10:FF:000086">
    <property type="entry name" value="protein zyg-11 homolog B isoform X2"/>
    <property type="match status" value="1"/>
</dbReference>
<dbReference type="Gene3D" id="1.25.10.10">
    <property type="entry name" value="Leucine-rich Repeat Variant"/>
    <property type="match status" value="1"/>
</dbReference>
<dbReference type="Gene3D" id="3.80.10.10">
    <property type="entry name" value="Ribonuclease Inhibitor"/>
    <property type="match status" value="1"/>
</dbReference>
<dbReference type="InterPro" id="IPR011989">
    <property type="entry name" value="ARM-like"/>
</dbReference>
<dbReference type="InterPro" id="IPR016024">
    <property type="entry name" value="ARM-type_fold"/>
</dbReference>
<dbReference type="InterPro" id="IPR032675">
    <property type="entry name" value="LRR_dom_sf"/>
</dbReference>
<dbReference type="InterPro" id="IPR055142">
    <property type="entry name" value="ZER1-like_C"/>
</dbReference>
<dbReference type="InterPro" id="IPR051341">
    <property type="entry name" value="Zyg-11_UBL_adapter"/>
</dbReference>
<dbReference type="PANTHER" id="PTHR12904">
    <property type="match status" value="1"/>
</dbReference>
<dbReference type="PANTHER" id="PTHR12904:SF20">
    <property type="entry name" value="PROTEIN ZYG-11 HOMOLOG A"/>
    <property type="match status" value="1"/>
</dbReference>
<dbReference type="Pfam" id="PF22964">
    <property type="entry name" value="ZER1-like_2nd"/>
    <property type="match status" value="1"/>
</dbReference>
<dbReference type="SUPFAM" id="SSF48371">
    <property type="entry name" value="ARM repeat"/>
    <property type="match status" value="1"/>
</dbReference>
<dbReference type="SUPFAM" id="SSF52047">
    <property type="entry name" value="RNI-like"/>
    <property type="match status" value="1"/>
</dbReference>
<comment type="function">
    <text evidence="1">Probably acts as a target recruitment subunit in an E3 ubiquitin ligase complex ZYGA-CUL2-elongin BC.</text>
</comment>
<comment type="alternative products">
    <event type="alternative splicing"/>
    <isoform>
        <id>Q6WRX3-1</id>
        <name>1</name>
        <sequence type="displayed"/>
    </isoform>
    <isoform>
        <id>Q6WRX3-2</id>
        <name>2</name>
        <sequence type="described" ref="VSP_028223"/>
    </isoform>
</comment>
<comment type="similarity">
    <text evidence="3">Belongs to the zyg-11 family.</text>
</comment>
<accession>Q6WRX3</accession>
<accession>A6NCK5</accession>
<protein>
    <recommendedName>
        <fullName>Protein zyg-11 homolog A</fullName>
    </recommendedName>
</protein>